<comment type="function">
    <text evidence="2 3 4">Mitochondrial membrane ATP synthase (F(1)F(0) ATP synthase or Complex V) produces ATP from ADP in the presence of a proton gradient across the membrane which is generated by electron transport complexes of the respiratory chain (PubMed:25759169). F-type ATP synthases consist of two structural domains, F(1) - containing the extramembraneous catalytic core, and F(0) - containing the membrane proton channel, linked together by a central stalk and a peripheral stalk (PubMed:27791192). During catalysis, ATP synthesis in the catalytic domain of F(1) is coupled via a rotary mechanism of the central stalk subunits to proton translocation (By similarity). Subunits alpha/ATP1 and beta/ATP2 form the catalytic core in F(1) (By similarity). Rotation of the central stalk against the surrounding alpha/ATP1(3)beta/ATP2(3) subunits leads to hydrolysis of ATP in three separate catalytic sites on the beta/ATP2 subunits (By similarity). Subunit alpha/ATP1 does not bear the catalytic high-affinity ATP-binding sites (By similarity).</text>
</comment>
<comment type="subunit">
    <text evidence="2 3 4">F-type ATP synthases have 2 components, the catalytic core F(1) and the membrane-embedded component F(0), linked together by a central stalk and a peripheral stalk (PubMed:27791192). The central stalk, also called rotor shaft, is often seen as part of F(1) (PubMed:27791192). The peripheral stalk is seen as part of F(0). F(0) contains the membrane channel next to the rotor (PubMed:27791192). F-type ATP synthases form dimers but each monomer functions independently in ATP generation (By similarity). The dimer consists of 18 different polypeptides: ATP1 (subunit alpha, part of F(1), 3 molecules per monomer), ATP2 (subunit beta, part of F(1), 3 molecules per monomer), ATP3 (subunit gamma, part of the central stalk), ATP4 (subunit b, part of the peripheral stalk), ATP5/OSCP (subunit 5/OSCP, part of the peripheral stalk), ATP6 (subunit a, part of the peripheral stalk), ATP7 (subunit d, part of the peripheral stalk), ATP8 (subunit 8, part of the peripheral stalk), OLI1 (subunit c, part of the rotor, 10 molecules per monomer), ATP14 (subunit h, part of the peripheral stalk), ATP15 (subunit epsilon, part of the central stalk), ATP16 (subunit delta, part of the central stalk), ATP17 (subunit f, part of the peripheral stalk), ATP18 (subunit i/j, part of the peripheral stalk) (PubMed:25759169, PubMed:27791192). Dimer-specific subunits are ATP19 (subunit k, at interface between monomers), ATP20 (subunit g, at interface between monomers), TIM11 (subunit e, at interface between monomers) (By similarity). Also contains subunit L (PubMed:25759169).</text>
</comment>
<comment type="subcellular location">
    <subcellularLocation>
        <location evidence="9">Mitochondrion inner membrane</location>
        <topology evidence="9">Peripheral membrane protein</topology>
        <orientation evidence="9">Matrix side</orientation>
    </subcellularLocation>
    <text evidence="9">The F-type ATP synthase complex is anchored in the mitochondrial inner membrane via the F(0) domain with the F(1) domain and the peripheral stalk extending into the mitochondrial matrix.</text>
</comment>
<comment type="mass spectrometry"/>
<comment type="similarity">
    <text evidence="8">Belongs to the ATPase alpha/beta chains family.</text>
</comment>
<keyword id="KW-0002">3D-structure</keyword>
<keyword id="KW-0066">ATP synthesis</keyword>
<keyword id="KW-0067">ATP-binding</keyword>
<keyword id="KW-0139">CF(1)</keyword>
<keyword id="KW-0903">Direct protein sequencing</keyword>
<keyword id="KW-0375">Hydrogen ion transport</keyword>
<keyword id="KW-0406">Ion transport</keyword>
<keyword id="KW-0472">Membrane</keyword>
<keyword id="KW-0496">Mitochondrion</keyword>
<keyword id="KW-0999">Mitochondrion inner membrane</keyword>
<keyword id="KW-0547">Nucleotide-binding</keyword>
<keyword id="KW-0809">Transit peptide</keyword>
<keyword id="KW-0813">Transport</keyword>
<feature type="chain" id="PRO_0000445309" description="ATP synthase subunit alpha, mitochondrial" evidence="5">
    <location>
        <begin position="1"/>
        <end position="510"/>
    </location>
</feature>
<feature type="binding site" evidence="4 10 11 12">
    <location>
        <begin position="171"/>
        <end position="178"/>
    </location>
    <ligand>
        <name>ATP</name>
        <dbReference type="ChEBI" id="CHEBI:30616"/>
    </ligand>
</feature>
<reference evidence="8" key="1">
    <citation type="submission" date="2016-08" db="UniProtKB">
        <authorList>
            <person name="Fearnley I.M."/>
        </authorList>
    </citation>
    <scope>PARTIAL PROTEIN SEQUENCE</scope>
    <source>
        <strain evidence="7">A16 / NCYC 2310</strain>
    </source>
</reference>
<reference evidence="8" key="2">
    <citation type="journal article" date="2015" name="Biochem. J.">
        <title>The purification and characterization of ATP synthase complexes from the mitochondria of four fungal species.</title>
        <authorList>
            <person name="Liu S."/>
            <person name="Charlesworth T.J."/>
            <person name="Bason J.V."/>
            <person name="Montgomery M.G."/>
            <person name="Harbour M.E."/>
            <person name="Fearnley I.M."/>
            <person name="Walker J.E."/>
        </authorList>
    </citation>
    <scope>PROTEIN SEQUENCE OF 1-5</scope>
    <scope>IDENTIFICATION IN ATP SYNTHASE COMPLEX</scope>
    <scope>FUNCTION OF ATPASE COMPLEX</scope>
    <scope>SUBUNIT</scope>
    <scope>SUBCELLULAR LOCATION</scope>
    <scope>MASS SPECTROMETRY</scope>
    <scope>IDENTIFICATION BY MASS SPECTROMETRY</scope>
    <source>
        <strain evidence="6">A16 / NCYC 2310</strain>
    </source>
</reference>
<reference evidence="10 11 12" key="3">
    <citation type="journal article" date="2016" name="Proc. Natl. Acad. Sci. U.S.A.">
        <title>Structure of the mitochondrial ATP synthase from Pichia angusta determined by electron cryo-microscopy.</title>
        <authorList>
            <person name="Vinothkumar K.R."/>
            <person name="Montgomery M.G."/>
            <person name="Liu S."/>
            <person name="Walker J.E."/>
        </authorList>
    </citation>
    <scope>STRUCTURE BY ELECTRON MICROSCOPY (7.0 ANGSTROMS) OF MONOMERIC ATP SYNTHASE COMPLEX IN COMPLEX WITH BOVINE ATPIF1</scope>
    <scope>FUNCTION</scope>
    <scope>SUBUNIT</scope>
    <scope>SUBCELLULAR LOCATION</scope>
</reference>
<name>ATPA_PICAN</name>
<protein>
    <recommendedName>
        <fullName evidence="6">ATP synthase subunit alpha, mitochondrial</fullName>
    </recommendedName>
</protein>
<organism evidence="6">
    <name type="scientific">Pichia angusta</name>
    <name type="common">Yeast</name>
    <name type="synonym">Hansenula polymorpha</name>
    <dbReference type="NCBI Taxonomy" id="870730"/>
    <lineage>
        <taxon>Eukaryota</taxon>
        <taxon>Fungi</taxon>
        <taxon>Dikarya</taxon>
        <taxon>Ascomycota</taxon>
        <taxon>Saccharomycotina</taxon>
        <taxon>Pichiomycetes</taxon>
        <taxon>Pichiales</taxon>
        <taxon>Pichiaceae</taxon>
        <taxon>Ogataea</taxon>
    </lineage>
</organism>
<sequence>ATAKAAPTEVSSILESKIRGVSDEANLDETGRVLSVGDGIARVFGLNNCQAEELVEFASGVKGMALNLEPGQVGIVLFGSDREVKEGEIVKRTGKIVDVPIGPGMLGRVVDALGNPIDGKGPIEATGYAIAQLKAPGILPRRSVFEPMQTGLKAVDALVPIGRGQRELIIGDRQTGKTAVALDTILNQKRWNDGNDESKKLYCVYVAVGQKRSTVAQLVQTLEQNDAMKYSIVVAATASEAAPLQYLAPFTACAIAEWFRDNGKHALIVYDDLSKQAVAYRQLSLLLRRPPGREAYPGDVFYLHSRLLERAAKMSDANGGGSLTALPVIETQGGDVSAYIPTNVISITDGQIFLEAELFYKGIRPAINVGLSVSRVGSAAQVKAMKQVAGSLKLFLAQYREVAAFAQFGSDLDASTKQTLSRGERLTQLLKQKQYSPQASEEQVPVIYAGVNGFLDNIPIERIPEFEEQFIAYLKANEGDILEAIRTKGELSSELLDKLKSATETFVATF</sequence>
<accession>C0HK51</accession>
<proteinExistence type="evidence at protein level"/>
<dbReference type="PDB" id="5LQX">
    <property type="method" value="EM"/>
    <property type="resolution" value="7.90 A"/>
    <property type="chains" value="A/B/C=1-510"/>
</dbReference>
<dbReference type="PDB" id="5LQY">
    <property type="method" value="EM"/>
    <property type="resolution" value="7.80 A"/>
    <property type="chains" value="A/B/C=1-510"/>
</dbReference>
<dbReference type="PDB" id="5LQZ">
    <property type="method" value="EM"/>
    <property type="resolution" value="7.00 A"/>
    <property type="chains" value="A/B/C=1-510"/>
</dbReference>
<dbReference type="PDBsum" id="5LQX"/>
<dbReference type="PDBsum" id="5LQY"/>
<dbReference type="PDBsum" id="5LQZ"/>
<dbReference type="EMDB" id="EMD-4100"/>
<dbReference type="EMDB" id="EMD-4101"/>
<dbReference type="EMDB" id="EMD-4102"/>
<dbReference type="SMR" id="C0HK51"/>
<dbReference type="GO" id="GO:0005743">
    <property type="term" value="C:mitochondrial inner membrane"/>
    <property type="evidence" value="ECO:0007669"/>
    <property type="project" value="UniProtKB-SubCell"/>
</dbReference>
<dbReference type="GO" id="GO:0045259">
    <property type="term" value="C:proton-transporting ATP synthase complex"/>
    <property type="evidence" value="ECO:0007669"/>
    <property type="project" value="UniProtKB-KW"/>
</dbReference>
<dbReference type="GO" id="GO:0043531">
    <property type="term" value="F:ADP binding"/>
    <property type="evidence" value="ECO:0007669"/>
    <property type="project" value="TreeGrafter"/>
</dbReference>
<dbReference type="GO" id="GO:0005524">
    <property type="term" value="F:ATP binding"/>
    <property type="evidence" value="ECO:0007669"/>
    <property type="project" value="UniProtKB-KW"/>
</dbReference>
<dbReference type="GO" id="GO:0046933">
    <property type="term" value="F:proton-transporting ATP synthase activity, rotational mechanism"/>
    <property type="evidence" value="ECO:0007669"/>
    <property type="project" value="InterPro"/>
</dbReference>
<dbReference type="CDD" id="cd18113">
    <property type="entry name" value="ATP-synt_F1_alpha_C"/>
    <property type="match status" value="1"/>
</dbReference>
<dbReference type="CDD" id="cd18116">
    <property type="entry name" value="ATP-synt_F1_alpha_N"/>
    <property type="match status" value="1"/>
</dbReference>
<dbReference type="CDD" id="cd01132">
    <property type="entry name" value="F1-ATPase_alpha_CD"/>
    <property type="match status" value="1"/>
</dbReference>
<dbReference type="FunFam" id="1.20.150.20:FF:000001">
    <property type="entry name" value="ATP synthase subunit alpha"/>
    <property type="match status" value="1"/>
</dbReference>
<dbReference type="FunFam" id="2.40.30.20:FF:000001">
    <property type="entry name" value="ATP synthase subunit alpha"/>
    <property type="match status" value="1"/>
</dbReference>
<dbReference type="FunFam" id="3.40.50.300:FF:004039">
    <property type="entry name" value="ATP synthase subunit alpha, mitochondrial"/>
    <property type="match status" value="1"/>
</dbReference>
<dbReference type="Gene3D" id="2.40.30.20">
    <property type="match status" value="1"/>
</dbReference>
<dbReference type="Gene3D" id="1.20.150.20">
    <property type="entry name" value="ATP synthase alpha/beta chain, C-terminal domain"/>
    <property type="match status" value="1"/>
</dbReference>
<dbReference type="Gene3D" id="3.40.50.300">
    <property type="entry name" value="P-loop containing nucleotide triphosphate hydrolases"/>
    <property type="match status" value="1"/>
</dbReference>
<dbReference type="HAMAP" id="MF_01346">
    <property type="entry name" value="ATP_synth_alpha_bact"/>
    <property type="match status" value="1"/>
</dbReference>
<dbReference type="InterPro" id="IPR023366">
    <property type="entry name" value="ATP_synth_asu-like_sf"/>
</dbReference>
<dbReference type="InterPro" id="IPR000793">
    <property type="entry name" value="ATP_synth_asu_C"/>
</dbReference>
<dbReference type="InterPro" id="IPR038376">
    <property type="entry name" value="ATP_synth_asu_C_sf"/>
</dbReference>
<dbReference type="InterPro" id="IPR033732">
    <property type="entry name" value="ATP_synth_F1_a_nt-bd_dom"/>
</dbReference>
<dbReference type="InterPro" id="IPR005294">
    <property type="entry name" value="ATP_synth_F1_asu"/>
</dbReference>
<dbReference type="InterPro" id="IPR020003">
    <property type="entry name" value="ATPase_a/bsu_AS"/>
</dbReference>
<dbReference type="InterPro" id="IPR004100">
    <property type="entry name" value="ATPase_F1/V1/A1_a/bsu_N"/>
</dbReference>
<dbReference type="InterPro" id="IPR036121">
    <property type="entry name" value="ATPase_F1/V1/A1_a/bsu_N_sf"/>
</dbReference>
<dbReference type="InterPro" id="IPR000194">
    <property type="entry name" value="ATPase_F1/V1/A1_a/bsu_nucl-bd"/>
</dbReference>
<dbReference type="InterPro" id="IPR027417">
    <property type="entry name" value="P-loop_NTPase"/>
</dbReference>
<dbReference type="NCBIfam" id="TIGR00962">
    <property type="entry name" value="atpA"/>
    <property type="match status" value="1"/>
</dbReference>
<dbReference type="NCBIfam" id="NF009884">
    <property type="entry name" value="PRK13343.1"/>
    <property type="match status" value="1"/>
</dbReference>
<dbReference type="PANTHER" id="PTHR48082">
    <property type="entry name" value="ATP SYNTHASE SUBUNIT ALPHA, MITOCHONDRIAL"/>
    <property type="match status" value="1"/>
</dbReference>
<dbReference type="PANTHER" id="PTHR48082:SF2">
    <property type="entry name" value="ATP SYNTHASE SUBUNIT ALPHA, MITOCHONDRIAL"/>
    <property type="match status" value="1"/>
</dbReference>
<dbReference type="Pfam" id="PF00006">
    <property type="entry name" value="ATP-synt_ab"/>
    <property type="match status" value="1"/>
</dbReference>
<dbReference type="Pfam" id="PF00306">
    <property type="entry name" value="ATP-synt_ab_C"/>
    <property type="match status" value="1"/>
</dbReference>
<dbReference type="Pfam" id="PF02874">
    <property type="entry name" value="ATP-synt_ab_N"/>
    <property type="match status" value="1"/>
</dbReference>
<dbReference type="PIRSF" id="PIRSF039088">
    <property type="entry name" value="F_ATPase_subunit_alpha"/>
    <property type="match status" value="1"/>
</dbReference>
<dbReference type="SUPFAM" id="SSF47917">
    <property type="entry name" value="C-terminal domain of alpha and beta subunits of F1 ATP synthase"/>
    <property type="match status" value="1"/>
</dbReference>
<dbReference type="SUPFAM" id="SSF50615">
    <property type="entry name" value="N-terminal domain of alpha and beta subunits of F1 ATP synthase"/>
    <property type="match status" value="1"/>
</dbReference>
<dbReference type="SUPFAM" id="SSF52540">
    <property type="entry name" value="P-loop containing nucleoside triphosphate hydrolases"/>
    <property type="match status" value="1"/>
</dbReference>
<dbReference type="PROSITE" id="PS00152">
    <property type="entry name" value="ATPASE_ALPHA_BETA"/>
    <property type="match status" value="1"/>
</dbReference>
<gene>
    <name evidence="1" type="primary">ATP1</name>
</gene>
<evidence type="ECO:0000250" key="1">
    <source>
        <dbReference type="UniProtKB" id="P07251"/>
    </source>
</evidence>
<evidence type="ECO:0000250" key="2">
    <source>
        <dbReference type="UniProtKB" id="Q6C326"/>
    </source>
</evidence>
<evidence type="ECO:0000269" key="3">
    <source>
    </source>
</evidence>
<evidence type="ECO:0000269" key="4">
    <source>
    </source>
</evidence>
<evidence type="ECO:0000269" key="5">
    <source ref="1"/>
</evidence>
<evidence type="ECO:0000303" key="6">
    <source>
    </source>
</evidence>
<evidence type="ECO:0000303" key="7">
    <source ref="1"/>
</evidence>
<evidence type="ECO:0000305" key="8"/>
<evidence type="ECO:0000305" key="9">
    <source>
    </source>
</evidence>
<evidence type="ECO:0007744" key="10">
    <source>
        <dbReference type="PDB" id="5LQX"/>
    </source>
</evidence>
<evidence type="ECO:0007744" key="11">
    <source>
        <dbReference type="PDB" id="5LQY"/>
    </source>
</evidence>
<evidence type="ECO:0007744" key="12">
    <source>
        <dbReference type="PDB" id="5LQZ"/>
    </source>
</evidence>